<gene>
    <name evidence="1" type="primary">eno</name>
    <name type="ordered locus">OEOE_1650</name>
</gene>
<comment type="function">
    <text evidence="1">Catalyzes the reversible conversion of 2-phosphoglycerate (2-PG) into phosphoenolpyruvate (PEP). It is essential for the degradation of carbohydrates via glycolysis.</text>
</comment>
<comment type="catalytic activity">
    <reaction evidence="1">
        <text>(2R)-2-phosphoglycerate = phosphoenolpyruvate + H2O</text>
        <dbReference type="Rhea" id="RHEA:10164"/>
        <dbReference type="ChEBI" id="CHEBI:15377"/>
        <dbReference type="ChEBI" id="CHEBI:58289"/>
        <dbReference type="ChEBI" id="CHEBI:58702"/>
        <dbReference type="EC" id="4.2.1.11"/>
    </reaction>
</comment>
<comment type="cofactor">
    <cofactor evidence="1">
        <name>Mg(2+)</name>
        <dbReference type="ChEBI" id="CHEBI:18420"/>
    </cofactor>
    <text evidence="1">Binds a second Mg(2+) ion via substrate during catalysis.</text>
</comment>
<comment type="pathway">
    <text evidence="1">Carbohydrate degradation; glycolysis; pyruvate from D-glyceraldehyde 3-phosphate: step 4/5.</text>
</comment>
<comment type="subcellular location">
    <subcellularLocation>
        <location evidence="1">Cytoplasm</location>
    </subcellularLocation>
    <subcellularLocation>
        <location evidence="1">Secreted</location>
    </subcellularLocation>
    <subcellularLocation>
        <location evidence="1">Cell surface</location>
    </subcellularLocation>
    <text evidence="1">Fractions of enolase are present in both the cytoplasm and on the cell surface.</text>
</comment>
<comment type="similarity">
    <text evidence="1">Belongs to the enolase family.</text>
</comment>
<protein>
    <recommendedName>
        <fullName evidence="1">Enolase</fullName>
        <ecNumber evidence="1">4.2.1.11</ecNumber>
    </recommendedName>
    <alternativeName>
        <fullName evidence="1">2-phospho-D-glycerate hydro-lyase</fullName>
    </alternativeName>
    <alternativeName>
        <fullName evidence="1">2-phosphoglycerate dehydratase</fullName>
    </alternativeName>
</protein>
<evidence type="ECO:0000255" key="1">
    <source>
        <dbReference type="HAMAP-Rule" id="MF_00318"/>
    </source>
</evidence>
<reference key="1">
    <citation type="journal article" date="2006" name="Proc. Natl. Acad. Sci. U.S.A.">
        <title>Comparative genomics of the lactic acid bacteria.</title>
        <authorList>
            <person name="Makarova K.S."/>
            <person name="Slesarev A."/>
            <person name="Wolf Y.I."/>
            <person name="Sorokin A."/>
            <person name="Mirkin B."/>
            <person name="Koonin E.V."/>
            <person name="Pavlov A."/>
            <person name="Pavlova N."/>
            <person name="Karamychev V."/>
            <person name="Polouchine N."/>
            <person name="Shakhova V."/>
            <person name="Grigoriev I."/>
            <person name="Lou Y."/>
            <person name="Rohksar D."/>
            <person name="Lucas S."/>
            <person name="Huang K."/>
            <person name="Goodstein D.M."/>
            <person name="Hawkins T."/>
            <person name="Plengvidhya V."/>
            <person name="Welker D."/>
            <person name="Hughes J."/>
            <person name="Goh Y."/>
            <person name="Benson A."/>
            <person name="Baldwin K."/>
            <person name="Lee J.-H."/>
            <person name="Diaz-Muniz I."/>
            <person name="Dosti B."/>
            <person name="Smeianov V."/>
            <person name="Wechter W."/>
            <person name="Barabote R."/>
            <person name="Lorca G."/>
            <person name="Altermann E."/>
            <person name="Barrangou R."/>
            <person name="Ganesan B."/>
            <person name="Xie Y."/>
            <person name="Rawsthorne H."/>
            <person name="Tamir D."/>
            <person name="Parker C."/>
            <person name="Breidt F."/>
            <person name="Broadbent J.R."/>
            <person name="Hutkins R."/>
            <person name="O'Sullivan D."/>
            <person name="Steele J."/>
            <person name="Unlu G."/>
            <person name="Saier M.H. Jr."/>
            <person name="Klaenhammer T."/>
            <person name="Richardson P."/>
            <person name="Kozyavkin S."/>
            <person name="Weimer B.C."/>
            <person name="Mills D.A."/>
        </authorList>
    </citation>
    <scope>NUCLEOTIDE SEQUENCE [LARGE SCALE GENOMIC DNA]</scope>
    <source>
        <strain>ATCC BAA-331 / PSU-1</strain>
    </source>
</reference>
<proteinExistence type="inferred from homology"/>
<keyword id="KW-0963">Cytoplasm</keyword>
<keyword id="KW-0324">Glycolysis</keyword>
<keyword id="KW-0456">Lyase</keyword>
<keyword id="KW-0460">Magnesium</keyword>
<keyword id="KW-0479">Metal-binding</keyword>
<keyword id="KW-1185">Reference proteome</keyword>
<keyword id="KW-0964">Secreted</keyword>
<accession>Q04DH2</accession>
<sequence>MSLIASIYAREVLDSRGNPTVEAEVYSEDGFFGRGIVPSGASTGEHEAVELRDGDKSRYLGKGVTKAVANVNGAIAEALIGKFDVADQRGIDLAMIALDGTPNKGKLGANAILSVSIATARAAAEEAGLPLYQYLGGPNSYVLPTPMMNVINGGVHSDNKVDFQEFMIMPVGAKTVKEAIRMGSETFHNLKKLLEADGKNTSVGDEGGFAPDFANNEEPLQYLVKAIQAAGYKPGKDIALATDVAASELYDADTKKYKLKWSTGEEFTAPEFEKYIEGLVAKYPIVSVEDPLDENEWDDWVEVTKELGKKVQIVGDDFFVTNTDYLKRGIEMGAANAILIKLNQIGTLTETFEAIEMAKEAGYTAIVSHRSGETEDTTIADLVVATNAGQIKTGSMSRTDRIAKYNQLMRIEDELNQGEPEGVSIYKGINSFYNLNADAKKEIQSHQG</sequence>
<feature type="chain" id="PRO_0000280868" description="Enolase">
    <location>
        <begin position="1"/>
        <end position="448"/>
    </location>
</feature>
<feature type="active site" description="Proton donor" evidence="1">
    <location>
        <position position="206"/>
    </location>
</feature>
<feature type="active site" description="Proton acceptor" evidence="1">
    <location>
        <position position="341"/>
    </location>
</feature>
<feature type="binding site" evidence="1">
    <location>
        <position position="164"/>
    </location>
    <ligand>
        <name>(2R)-2-phosphoglycerate</name>
        <dbReference type="ChEBI" id="CHEBI:58289"/>
    </ligand>
</feature>
<feature type="binding site" evidence="1">
    <location>
        <position position="243"/>
    </location>
    <ligand>
        <name>Mg(2+)</name>
        <dbReference type="ChEBI" id="CHEBI:18420"/>
    </ligand>
</feature>
<feature type="binding site" evidence="1">
    <location>
        <position position="289"/>
    </location>
    <ligand>
        <name>Mg(2+)</name>
        <dbReference type="ChEBI" id="CHEBI:18420"/>
    </ligand>
</feature>
<feature type="binding site" evidence="1">
    <location>
        <position position="316"/>
    </location>
    <ligand>
        <name>Mg(2+)</name>
        <dbReference type="ChEBI" id="CHEBI:18420"/>
    </ligand>
</feature>
<feature type="binding site" evidence="1">
    <location>
        <position position="341"/>
    </location>
    <ligand>
        <name>(2R)-2-phosphoglycerate</name>
        <dbReference type="ChEBI" id="CHEBI:58289"/>
    </ligand>
</feature>
<feature type="binding site" evidence="1">
    <location>
        <position position="370"/>
    </location>
    <ligand>
        <name>(2R)-2-phosphoglycerate</name>
        <dbReference type="ChEBI" id="CHEBI:58289"/>
    </ligand>
</feature>
<feature type="binding site" evidence="1">
    <location>
        <position position="371"/>
    </location>
    <ligand>
        <name>(2R)-2-phosphoglycerate</name>
        <dbReference type="ChEBI" id="CHEBI:58289"/>
    </ligand>
</feature>
<feature type="binding site" evidence="1">
    <location>
        <position position="392"/>
    </location>
    <ligand>
        <name>(2R)-2-phosphoglycerate</name>
        <dbReference type="ChEBI" id="CHEBI:58289"/>
    </ligand>
</feature>
<name>ENO_OENOB</name>
<dbReference type="EC" id="4.2.1.11" evidence="1"/>
<dbReference type="EMBL" id="CP000411">
    <property type="protein sequence ID" value="ABJ57500.1"/>
    <property type="molecule type" value="Genomic_DNA"/>
</dbReference>
<dbReference type="RefSeq" id="WP_002819470.1">
    <property type="nucleotide sequence ID" value="NC_008528.1"/>
</dbReference>
<dbReference type="SMR" id="Q04DH2"/>
<dbReference type="STRING" id="203123.OEOE_1650"/>
<dbReference type="GeneID" id="75066559"/>
<dbReference type="KEGG" id="ooe:OEOE_1650"/>
<dbReference type="eggNOG" id="COG0148">
    <property type="taxonomic scope" value="Bacteria"/>
</dbReference>
<dbReference type="HOGENOM" id="CLU_031223_2_1_9"/>
<dbReference type="UniPathway" id="UPA00109">
    <property type="reaction ID" value="UER00187"/>
</dbReference>
<dbReference type="Proteomes" id="UP000000774">
    <property type="component" value="Chromosome"/>
</dbReference>
<dbReference type="GO" id="GO:0009986">
    <property type="term" value="C:cell surface"/>
    <property type="evidence" value="ECO:0007669"/>
    <property type="project" value="UniProtKB-SubCell"/>
</dbReference>
<dbReference type="GO" id="GO:0005576">
    <property type="term" value="C:extracellular region"/>
    <property type="evidence" value="ECO:0007669"/>
    <property type="project" value="UniProtKB-SubCell"/>
</dbReference>
<dbReference type="GO" id="GO:0000015">
    <property type="term" value="C:phosphopyruvate hydratase complex"/>
    <property type="evidence" value="ECO:0007669"/>
    <property type="project" value="InterPro"/>
</dbReference>
<dbReference type="GO" id="GO:0000287">
    <property type="term" value="F:magnesium ion binding"/>
    <property type="evidence" value="ECO:0007669"/>
    <property type="project" value="UniProtKB-UniRule"/>
</dbReference>
<dbReference type="GO" id="GO:0004634">
    <property type="term" value="F:phosphopyruvate hydratase activity"/>
    <property type="evidence" value="ECO:0007669"/>
    <property type="project" value="UniProtKB-UniRule"/>
</dbReference>
<dbReference type="GO" id="GO:0006096">
    <property type="term" value="P:glycolytic process"/>
    <property type="evidence" value="ECO:0007669"/>
    <property type="project" value="UniProtKB-UniRule"/>
</dbReference>
<dbReference type="CDD" id="cd03313">
    <property type="entry name" value="enolase"/>
    <property type="match status" value="1"/>
</dbReference>
<dbReference type="FunFam" id="3.20.20.120:FF:000001">
    <property type="entry name" value="Enolase"/>
    <property type="match status" value="1"/>
</dbReference>
<dbReference type="FunFam" id="3.30.390.10:FF:000001">
    <property type="entry name" value="Enolase"/>
    <property type="match status" value="1"/>
</dbReference>
<dbReference type="Gene3D" id="3.20.20.120">
    <property type="entry name" value="Enolase-like C-terminal domain"/>
    <property type="match status" value="1"/>
</dbReference>
<dbReference type="Gene3D" id="3.30.390.10">
    <property type="entry name" value="Enolase-like, N-terminal domain"/>
    <property type="match status" value="1"/>
</dbReference>
<dbReference type="HAMAP" id="MF_00318">
    <property type="entry name" value="Enolase"/>
    <property type="match status" value="1"/>
</dbReference>
<dbReference type="InterPro" id="IPR000941">
    <property type="entry name" value="Enolase"/>
</dbReference>
<dbReference type="InterPro" id="IPR036849">
    <property type="entry name" value="Enolase-like_C_sf"/>
</dbReference>
<dbReference type="InterPro" id="IPR029017">
    <property type="entry name" value="Enolase-like_N"/>
</dbReference>
<dbReference type="InterPro" id="IPR020810">
    <property type="entry name" value="Enolase_C"/>
</dbReference>
<dbReference type="InterPro" id="IPR020809">
    <property type="entry name" value="Enolase_CS"/>
</dbReference>
<dbReference type="InterPro" id="IPR020811">
    <property type="entry name" value="Enolase_N"/>
</dbReference>
<dbReference type="NCBIfam" id="TIGR01060">
    <property type="entry name" value="eno"/>
    <property type="match status" value="1"/>
</dbReference>
<dbReference type="PANTHER" id="PTHR11902">
    <property type="entry name" value="ENOLASE"/>
    <property type="match status" value="1"/>
</dbReference>
<dbReference type="PANTHER" id="PTHR11902:SF1">
    <property type="entry name" value="ENOLASE"/>
    <property type="match status" value="1"/>
</dbReference>
<dbReference type="Pfam" id="PF00113">
    <property type="entry name" value="Enolase_C"/>
    <property type="match status" value="1"/>
</dbReference>
<dbReference type="Pfam" id="PF03952">
    <property type="entry name" value="Enolase_N"/>
    <property type="match status" value="1"/>
</dbReference>
<dbReference type="PIRSF" id="PIRSF001400">
    <property type="entry name" value="Enolase"/>
    <property type="match status" value="1"/>
</dbReference>
<dbReference type="PRINTS" id="PR00148">
    <property type="entry name" value="ENOLASE"/>
</dbReference>
<dbReference type="SFLD" id="SFLDF00002">
    <property type="entry name" value="enolase"/>
    <property type="match status" value="1"/>
</dbReference>
<dbReference type="SFLD" id="SFLDG00178">
    <property type="entry name" value="enolase"/>
    <property type="match status" value="1"/>
</dbReference>
<dbReference type="SMART" id="SM01192">
    <property type="entry name" value="Enolase_C"/>
    <property type="match status" value="1"/>
</dbReference>
<dbReference type="SMART" id="SM01193">
    <property type="entry name" value="Enolase_N"/>
    <property type="match status" value="1"/>
</dbReference>
<dbReference type="SUPFAM" id="SSF51604">
    <property type="entry name" value="Enolase C-terminal domain-like"/>
    <property type="match status" value="1"/>
</dbReference>
<dbReference type="SUPFAM" id="SSF54826">
    <property type="entry name" value="Enolase N-terminal domain-like"/>
    <property type="match status" value="1"/>
</dbReference>
<dbReference type="PROSITE" id="PS00164">
    <property type="entry name" value="ENOLASE"/>
    <property type="match status" value="1"/>
</dbReference>
<organism>
    <name type="scientific">Oenococcus oeni (strain ATCC BAA-331 / PSU-1)</name>
    <dbReference type="NCBI Taxonomy" id="203123"/>
    <lineage>
        <taxon>Bacteria</taxon>
        <taxon>Bacillati</taxon>
        <taxon>Bacillota</taxon>
        <taxon>Bacilli</taxon>
        <taxon>Lactobacillales</taxon>
        <taxon>Lactobacillaceae</taxon>
        <taxon>Oenococcus</taxon>
    </lineage>
</organism>